<keyword id="KW-0472">Membrane</keyword>
<keyword id="KW-0496">Mitochondrion</keyword>
<keyword id="KW-0999">Mitochondrion inner membrane</keyword>
<keyword id="KW-0809">Transit peptide</keyword>
<sequence length="725" mass="80627">MHRLMLRGIQCYGCRSHVIQSFLAIADITFPAPRYHKPCPRSPLHHQSSFSSLHGQPFRGQSIARSASSGEPSVDNGSEQSPDAASQSNEHVPWYLKEETAELASHPLGQQQLIPPLPDNPPPMLEDLLQHISVDIGLDDLSLLDLRNRNPPPALGANLIMIIGTARSVKHLNVAADRLCRWLRSTYKLQPTADGLLGRNELKIKLRRKARRAKLSSNVSSSFEEKDDGITTGWICVNVGSVENGKPAAGAQKRDFAGFGNVADSARIVVQMLTEEKRAELDLEGLWNGNFPPRSPSELRAFEQQFEQFAEKAAAEATSGRGMYRDSRSHATGSGIDPGQRRGLHTSRRVQSISIEAVLSPGMVPRQEAALNHEDHLVSPRNAPAKASKPLNVPPEITSLLQHLAQLPRDDALRELGSGPRDMGSTLFLRLFQQALDNAEDPDGNILAKLELIRIAVTLQHPQYTKADLFDAFKELAASGYDISESQALQTVKTLLSFGDNDADVSNVAKRVLRSDIDLALKVLNHMSLRGMDILSREVFSMLYTASGFQVPVRPTNDNLSPSSVETEKSTPVSAEELNEVRLVQDRLRKIMDAFDVKFGPEQFLSLLRFHFHHGNYDQFWAIWRKMSLLQLPRSKEFYVLLFRLHAERGNQKRAAECLSSWVPMMAREQPPVHLDADIARVVMACLLVANPDVKQRADAGDPGEYPNLWNRCWNALVASQTVQE</sequence>
<protein>
    <recommendedName>
        <fullName>ATPase synthesis protein 25, mitochondrial</fullName>
    </recommendedName>
</protein>
<name>ATP25_COCP7</name>
<organism>
    <name type="scientific">Coccidioides posadasii (strain C735)</name>
    <name type="common">Valley fever fungus</name>
    <dbReference type="NCBI Taxonomy" id="222929"/>
    <lineage>
        <taxon>Eukaryota</taxon>
        <taxon>Fungi</taxon>
        <taxon>Dikarya</taxon>
        <taxon>Ascomycota</taxon>
        <taxon>Pezizomycotina</taxon>
        <taxon>Eurotiomycetes</taxon>
        <taxon>Eurotiomycetidae</taxon>
        <taxon>Onygenales</taxon>
        <taxon>Onygenaceae</taxon>
        <taxon>Coccidioides</taxon>
    </lineage>
</organism>
<comment type="function">
    <text evidence="1">Probable mitochondrial mRNA stabilization factor.</text>
</comment>
<comment type="subcellular location">
    <subcellularLocation>
        <location evidence="1">Mitochondrion inner membrane</location>
        <topology evidence="1">Peripheral membrane protein</topology>
        <orientation evidence="1">Matrix side</orientation>
    </subcellularLocation>
</comment>
<comment type="similarity">
    <text evidence="4">Belongs to the ATP25 family.</text>
</comment>
<feature type="transit peptide" description="Mitochondrion" evidence="2">
    <location>
        <begin position="1"/>
        <end position="66"/>
    </location>
</feature>
<feature type="chain" id="PRO_0000404469" description="ATPase synthesis protein 25, mitochondrial">
    <location>
        <begin position="67"/>
        <end position="725"/>
    </location>
</feature>
<feature type="region of interest" description="Disordered" evidence="3">
    <location>
        <begin position="39"/>
        <end position="89"/>
    </location>
</feature>
<feature type="region of interest" description="Disordered" evidence="3">
    <location>
        <begin position="317"/>
        <end position="346"/>
    </location>
</feature>
<feature type="compositionally biased region" description="Polar residues" evidence="3">
    <location>
        <begin position="45"/>
        <end position="54"/>
    </location>
</feature>
<feature type="compositionally biased region" description="Polar residues" evidence="3">
    <location>
        <begin position="63"/>
        <end position="89"/>
    </location>
</feature>
<proteinExistence type="inferred from homology"/>
<dbReference type="EMBL" id="ACFW01000043">
    <property type="protein sequence ID" value="EER25215.1"/>
    <property type="molecule type" value="Genomic_DNA"/>
</dbReference>
<dbReference type="RefSeq" id="XP_003067360.1">
    <property type="nucleotide sequence ID" value="XM_003067314.1"/>
</dbReference>
<dbReference type="SMR" id="C5PDQ4"/>
<dbReference type="GeneID" id="9692971"/>
<dbReference type="KEGG" id="cpw:9692971"/>
<dbReference type="VEuPathDB" id="FungiDB:CPC735_018190"/>
<dbReference type="HOGENOM" id="CLU_016140_0_0_1"/>
<dbReference type="OrthoDB" id="107372at2759"/>
<dbReference type="Proteomes" id="UP000009084">
    <property type="component" value="Unassembled WGS sequence"/>
</dbReference>
<dbReference type="GO" id="GO:0005743">
    <property type="term" value="C:mitochondrial inner membrane"/>
    <property type="evidence" value="ECO:0007669"/>
    <property type="project" value="UniProtKB-SubCell"/>
</dbReference>
<dbReference type="GO" id="GO:0140053">
    <property type="term" value="P:mitochondrial gene expression"/>
    <property type="evidence" value="ECO:0007669"/>
    <property type="project" value="InterPro"/>
</dbReference>
<dbReference type="GO" id="GO:0048255">
    <property type="term" value="P:mRNA stabilization"/>
    <property type="evidence" value="ECO:0007669"/>
    <property type="project" value="TreeGrafter"/>
</dbReference>
<dbReference type="FunFam" id="3.30.460.10:FF:000044">
    <property type="entry name" value="ATPase synthesis protein 25, mitochondrial"/>
    <property type="match status" value="1"/>
</dbReference>
<dbReference type="Gene3D" id="3.30.460.10">
    <property type="entry name" value="Beta Polymerase, domain 2"/>
    <property type="match status" value="1"/>
</dbReference>
<dbReference type="InterPro" id="IPR040152">
    <property type="entry name" value="Atp25"/>
</dbReference>
<dbReference type="InterPro" id="IPR043519">
    <property type="entry name" value="NT_sf"/>
</dbReference>
<dbReference type="PANTHER" id="PTHR28087">
    <property type="entry name" value="ATPASE SYNTHESIS PROTEIN 25, MITOCHONDRIAL"/>
    <property type="match status" value="1"/>
</dbReference>
<dbReference type="PANTHER" id="PTHR28087:SF1">
    <property type="entry name" value="ATPASE SYNTHESIS PROTEIN 25, MITOCHONDRIAL"/>
    <property type="match status" value="1"/>
</dbReference>
<dbReference type="Pfam" id="PF02410">
    <property type="entry name" value="RsfS"/>
    <property type="match status" value="1"/>
</dbReference>
<accession>C5PDQ4</accession>
<reference key="1">
    <citation type="journal article" date="2009" name="Genome Res.">
        <title>Comparative genomic analyses of the human fungal pathogens Coccidioides and their relatives.</title>
        <authorList>
            <person name="Sharpton T.J."/>
            <person name="Stajich J.E."/>
            <person name="Rounsley S.D."/>
            <person name="Gardner M.J."/>
            <person name="Wortman J.R."/>
            <person name="Jordar V.S."/>
            <person name="Maiti R."/>
            <person name="Kodira C.D."/>
            <person name="Neafsey D.E."/>
            <person name="Zeng Q."/>
            <person name="Hung C.-Y."/>
            <person name="McMahan C."/>
            <person name="Muszewska A."/>
            <person name="Grynberg M."/>
            <person name="Mandel M.A."/>
            <person name="Kellner E.M."/>
            <person name="Barker B.M."/>
            <person name="Galgiani J.N."/>
            <person name="Orbach M.J."/>
            <person name="Kirkland T.N."/>
            <person name="Cole G.T."/>
            <person name="Henn M.R."/>
            <person name="Birren B.W."/>
            <person name="Taylor J.W."/>
        </authorList>
    </citation>
    <scope>NUCLEOTIDE SEQUENCE [LARGE SCALE GENOMIC DNA]</scope>
    <source>
        <strain>C735</strain>
    </source>
</reference>
<gene>
    <name type="primary">ATP25</name>
    <name type="ORF">CPC735_018190</name>
</gene>
<evidence type="ECO:0000250" key="1"/>
<evidence type="ECO:0000255" key="2"/>
<evidence type="ECO:0000256" key="3">
    <source>
        <dbReference type="SAM" id="MobiDB-lite"/>
    </source>
</evidence>
<evidence type="ECO:0000305" key="4"/>